<gene>
    <name evidence="1" type="primary">rpl33</name>
</gene>
<comment type="subcellular location">
    <subcellularLocation>
        <location>Plastid</location>
        <location>Chloroplast</location>
    </subcellularLocation>
</comment>
<comment type="similarity">
    <text evidence="1">Belongs to the bacterial ribosomal protein bL33 family.</text>
</comment>
<dbReference type="EMBL" id="DQ898156">
    <property type="protein sequence ID" value="ABI32445.1"/>
    <property type="molecule type" value="Genomic_DNA"/>
</dbReference>
<dbReference type="RefSeq" id="YP_740138.1">
    <property type="nucleotide sequence ID" value="NC_008325.1"/>
</dbReference>
<dbReference type="GeneID" id="4266766"/>
<dbReference type="OMA" id="ECTEHKA"/>
<dbReference type="GO" id="GO:0009507">
    <property type="term" value="C:chloroplast"/>
    <property type="evidence" value="ECO:0007669"/>
    <property type="project" value="UniProtKB-SubCell"/>
</dbReference>
<dbReference type="GO" id="GO:1990904">
    <property type="term" value="C:ribonucleoprotein complex"/>
    <property type="evidence" value="ECO:0007669"/>
    <property type="project" value="UniProtKB-KW"/>
</dbReference>
<dbReference type="GO" id="GO:0005840">
    <property type="term" value="C:ribosome"/>
    <property type="evidence" value="ECO:0007669"/>
    <property type="project" value="UniProtKB-KW"/>
</dbReference>
<dbReference type="GO" id="GO:0003735">
    <property type="term" value="F:structural constituent of ribosome"/>
    <property type="evidence" value="ECO:0007669"/>
    <property type="project" value="InterPro"/>
</dbReference>
<dbReference type="GO" id="GO:0006412">
    <property type="term" value="P:translation"/>
    <property type="evidence" value="ECO:0007669"/>
    <property type="project" value="UniProtKB-UniRule"/>
</dbReference>
<dbReference type="Gene3D" id="2.20.28.120">
    <property type="entry name" value="Ribosomal protein L33"/>
    <property type="match status" value="1"/>
</dbReference>
<dbReference type="HAMAP" id="MF_00294">
    <property type="entry name" value="Ribosomal_bL33"/>
    <property type="match status" value="1"/>
</dbReference>
<dbReference type="InterPro" id="IPR001705">
    <property type="entry name" value="Ribosomal_bL33"/>
</dbReference>
<dbReference type="InterPro" id="IPR018264">
    <property type="entry name" value="Ribosomal_bL33_CS"/>
</dbReference>
<dbReference type="InterPro" id="IPR038584">
    <property type="entry name" value="Ribosomal_bL33_sf"/>
</dbReference>
<dbReference type="InterPro" id="IPR011332">
    <property type="entry name" value="Ribosomal_zn-bd"/>
</dbReference>
<dbReference type="NCBIfam" id="NF001764">
    <property type="entry name" value="PRK00504.1"/>
    <property type="match status" value="1"/>
</dbReference>
<dbReference type="NCBIfam" id="NF001860">
    <property type="entry name" value="PRK00595.1"/>
    <property type="match status" value="1"/>
</dbReference>
<dbReference type="NCBIfam" id="TIGR01023">
    <property type="entry name" value="rpmG_bact"/>
    <property type="match status" value="1"/>
</dbReference>
<dbReference type="PANTHER" id="PTHR43168">
    <property type="entry name" value="50S RIBOSOMAL PROTEIN L33, CHLOROPLASTIC"/>
    <property type="match status" value="1"/>
</dbReference>
<dbReference type="PANTHER" id="PTHR43168:SF2">
    <property type="entry name" value="LARGE RIBOSOMAL SUBUNIT PROTEIN BL33C"/>
    <property type="match status" value="1"/>
</dbReference>
<dbReference type="Pfam" id="PF00471">
    <property type="entry name" value="Ribosomal_L33"/>
    <property type="match status" value="1"/>
</dbReference>
<dbReference type="SUPFAM" id="SSF57829">
    <property type="entry name" value="Zn-binding ribosomal proteins"/>
    <property type="match status" value="1"/>
</dbReference>
<dbReference type="PROSITE" id="PS00582">
    <property type="entry name" value="RIBOSOMAL_L33"/>
    <property type="match status" value="1"/>
</dbReference>
<reference key="1">
    <citation type="journal article" date="2006" name="BMC Genomics">
        <title>Complete plastid genome sequence of Daucus carota: implications for biotechnology and phylogeny of angiosperms.</title>
        <authorList>
            <person name="Ruhlman T."/>
            <person name="Lee S.-B."/>
            <person name="Jansen R.K."/>
            <person name="Hostetler J.B."/>
            <person name="Tallon L.J."/>
            <person name="Town C.D."/>
            <person name="Daniell H."/>
        </authorList>
    </citation>
    <scope>NUCLEOTIDE SEQUENCE [LARGE SCALE GENOMIC DNA]</scope>
    <source>
        <strain>cv. Danvers Half-long</strain>
    </source>
</reference>
<feature type="chain" id="PRO_0000276499" description="Large ribosomal subunit protein bL33c">
    <location>
        <begin position="1"/>
        <end position="66"/>
    </location>
</feature>
<protein>
    <recommendedName>
        <fullName evidence="1">Large ribosomal subunit protein bL33c</fullName>
    </recommendedName>
    <alternativeName>
        <fullName evidence="2">50S ribosomal protein L33, chloroplastic</fullName>
    </alternativeName>
</protein>
<proteinExistence type="inferred from homology"/>
<sequence length="66" mass="7622">MAKGKDVRITVILECTGCVRNGVNKVSTGISRYITEKNRHNTPNRLELRKFCPFCYKHTMHGEIKK</sequence>
<geneLocation type="chloroplast"/>
<accession>Q0G9U1</accession>
<keyword id="KW-0150">Chloroplast</keyword>
<keyword id="KW-0934">Plastid</keyword>
<keyword id="KW-0687">Ribonucleoprotein</keyword>
<keyword id="KW-0689">Ribosomal protein</keyword>
<name>RK33_DAUCA</name>
<evidence type="ECO:0000255" key="1">
    <source>
        <dbReference type="HAMAP-Rule" id="MF_00294"/>
    </source>
</evidence>
<evidence type="ECO:0000305" key="2"/>
<organism>
    <name type="scientific">Daucus carota</name>
    <name type="common">Wild carrot</name>
    <dbReference type="NCBI Taxonomy" id="4039"/>
    <lineage>
        <taxon>Eukaryota</taxon>
        <taxon>Viridiplantae</taxon>
        <taxon>Streptophyta</taxon>
        <taxon>Embryophyta</taxon>
        <taxon>Tracheophyta</taxon>
        <taxon>Spermatophyta</taxon>
        <taxon>Magnoliopsida</taxon>
        <taxon>eudicotyledons</taxon>
        <taxon>Gunneridae</taxon>
        <taxon>Pentapetalae</taxon>
        <taxon>asterids</taxon>
        <taxon>campanulids</taxon>
        <taxon>Apiales</taxon>
        <taxon>Apiaceae</taxon>
        <taxon>Apioideae</taxon>
        <taxon>Scandiceae</taxon>
        <taxon>Daucinae</taxon>
        <taxon>Daucus</taxon>
        <taxon>Daucus sect. Daucus</taxon>
    </lineage>
</organism>